<comment type="function">
    <text evidence="3">Non-canonical nonribosomal peptide synthetase; part of the gene cluster that mediates the biosynthesis of campesine G, a dimeric indole piperazine alkaloid that shows good insecticidal activity Galleria mellonella (PubMed:38527935). CpsA catalyzes the first steps of the pathway by producing L-tryptophanal and L-valinal from their respective amino-acids. These products condensate spontaneously to form trypyl-valyl pyrazine also known as didehydrocampesine A (PubMed:38527935). The NmrA-like family domain-containing oxidoreductase cpsB is the next enzyme in cps pathway and reduces the unstable didehydrocampesine A to campesine A. The methyltransferase cpsF and the acetyltransferase cpsE both recognize N13 of piperazine ring to carry out methylation and acetylation of campesine A to produce campesine C and B, respectively. The cytochrome P450 monooxygenase cpsD then acts as a dimerase that catalyzes oxidative heterocoupling between campesine B and C to produce heterodimers with unexpected 6/5/6/6/6/6/5/6 eight-ring scaffold called campesine D. Finally,the cytochrome P450 monooxygenase cpsC is a regioselective dehydrogenase that catalyzes dehydrogenation reaction towards C2-N1 to produce campesine G (PubMed:38527935).</text>
</comment>
<comment type="catalytic activity">
    <reaction evidence="3">
        <text>L-valine + ATP + NADPH + H(+) = L-valinal + AMP + diphosphate + NADP(+)</text>
        <dbReference type="Rhea" id="RHEA:83455"/>
        <dbReference type="ChEBI" id="CHEBI:15378"/>
        <dbReference type="ChEBI" id="CHEBI:30616"/>
        <dbReference type="ChEBI" id="CHEBI:33019"/>
        <dbReference type="ChEBI" id="CHEBI:57762"/>
        <dbReference type="ChEBI" id="CHEBI:57783"/>
        <dbReference type="ChEBI" id="CHEBI:58349"/>
        <dbReference type="ChEBI" id="CHEBI:233077"/>
        <dbReference type="ChEBI" id="CHEBI:456215"/>
    </reaction>
    <physiologicalReaction direction="left-to-right" evidence="3">
        <dbReference type="Rhea" id="RHEA:83456"/>
    </physiologicalReaction>
</comment>
<comment type="catalytic activity">
    <reaction evidence="3">
        <text>L-tryptophan + ATP + NADPH + H(+) = L-tryptophanal + AMP + diphosphate + NADP(+)</text>
        <dbReference type="Rhea" id="RHEA:83479"/>
        <dbReference type="ChEBI" id="CHEBI:15378"/>
        <dbReference type="ChEBI" id="CHEBI:30616"/>
        <dbReference type="ChEBI" id="CHEBI:33019"/>
        <dbReference type="ChEBI" id="CHEBI:57783"/>
        <dbReference type="ChEBI" id="CHEBI:57912"/>
        <dbReference type="ChEBI" id="CHEBI:58349"/>
        <dbReference type="ChEBI" id="CHEBI:233078"/>
        <dbReference type="ChEBI" id="CHEBI:456215"/>
    </reaction>
    <physiologicalReaction direction="left-to-right" evidence="3">
        <dbReference type="Rhea" id="RHEA:83480"/>
    </physiologicalReaction>
</comment>
<comment type="cofactor">
    <cofactor evidence="2">
        <name>pantetheine 4'-phosphate</name>
        <dbReference type="ChEBI" id="CHEBI:47942"/>
    </cofactor>
</comment>
<comment type="pathway">
    <text evidence="3">Alkaloid biosynthesis.</text>
</comment>
<comment type="domain">
    <text evidence="6">NRP synthetases are composed of discrete domains (adenylation (A), thiolation (T) or peptidyl carrier protein (PCP) and condensation (C) domains) which when grouped together are referred to as a single module. Each module is responsible for the recognition (via the A domain) and incorporation of a single amino acid into the growing peptide product. Thus, an NRP synthetase is generally composed of one or more modules and can terminate in a thioesterase domain (TE) that releases the newly synthesized peptide from the enzyme. Occasionally, epimerase (E) domains (responsible for L- to D-amino acid conversion) are present within the NRP synthetase. CpsA contains an amino acid adenylation domain (A), a peptidyl carrier protein (PCP) domain with a phosphopantetheine prosthetic group, and a short-chain dehydrogenase/reductase terminus (R), but it does not have an identifiable condensation (C) domain required for the formation of peptide bonds during non-ribosomal peptide synthesis.</text>
</comment>
<comment type="biotechnology">
    <text evidence="3">Campesine G features good insecticidal activity against the global honeybee pest Galleria mellonella, which supports its future application in the development of biopesticides.</text>
</comment>
<comment type="similarity">
    <text evidence="5">Belongs to the NRP synthetase family.</text>
</comment>
<reference key="1">
    <citation type="submission" date="2016-12" db="EMBL/GenBank/DDBJ databases">
        <title>The genomes of Aspergillus section Nigri reveals drivers in fungal speciation.</title>
        <authorList>
            <consortium name="DOE Joint Genome Institute"/>
            <person name="Vesth T.C."/>
            <person name="Nybo J."/>
            <person name="Theobald S."/>
            <person name="Brandl J."/>
            <person name="Frisvad J.C."/>
            <person name="Nielsen K.F."/>
            <person name="Lyhne E.K."/>
            <person name="Kogle M.E."/>
            <person name="Kuo A."/>
            <person name="Riley R."/>
            <person name="Clum A."/>
            <person name="Nolan M."/>
            <person name="Lipzen A."/>
            <person name="Salamov A."/>
            <person name="Henrissat B."/>
            <person name="Wiebenga A."/>
            <person name="De Vries R.P."/>
            <person name="Grigoriev I.V."/>
            <person name="Mortensen U.H."/>
            <person name="Andersen M.R."/>
            <person name="Baker S.E."/>
        </authorList>
    </citation>
    <scope>NUCLEOTIDE SEQUENCE [LARGE SCALE GENOMIC DNA]</scope>
    <source>
        <strain>IBT 28561</strain>
    </source>
</reference>
<reference key="2">
    <citation type="journal article" date="2024" name="Angew. Chem. Int. Ed.">
        <title>A Cytochrome P450 Catalyzes Oxidative Coupling Formation of Insecticidal Dimeric Indole Piperazine Alkaloids.</title>
        <authorList>
            <person name="He Q."/>
            <person name="Zhang H.R."/>
            <person name="Zou Y."/>
        </authorList>
    </citation>
    <scope>FUNCTION</scope>
    <scope>CATALYTIC ACTIVITY</scope>
    <scope>BIOTECHNOLOGY</scope>
    <scope>PATHWAY</scope>
</reference>
<protein>
    <recommendedName>
        <fullName evidence="4">Non-canonical nonribosomal peptide synthetase cpsA</fullName>
        <ecNumber evidence="3">1.2.1.-</ecNumber>
    </recommendedName>
    <alternativeName>
        <fullName evidence="4">Campesines biosynthesis cluster protein A</fullName>
    </alternativeName>
</protein>
<proteinExistence type="evidence at protein level"/>
<feature type="chain" id="PRO_0000461451" description="Non-canonical nonribosomal peptide synthetase cpsA">
    <location>
        <begin position="1"/>
        <end position="1043"/>
    </location>
</feature>
<feature type="domain" description="Carrier" evidence="2">
    <location>
        <begin position="549"/>
        <end position="626"/>
    </location>
</feature>
<feature type="domain" description="Thioester reductase (TE)" evidence="1">
    <location>
        <begin position="672"/>
        <end position="915"/>
    </location>
</feature>
<feature type="region of interest" description="Adenylation (A) domain" evidence="1 6">
    <location>
        <begin position="41"/>
        <end position="386"/>
    </location>
</feature>
<feature type="region of interest" description="Short-chain dehydrogenase/reductase (R) domain" evidence="1 6">
    <location>
        <begin position="671"/>
        <end position="914"/>
    </location>
</feature>
<feature type="modified residue" description="O-(pantetheine 4'-phosphoryl)serine" evidence="2">
    <location>
        <position position="586"/>
    </location>
</feature>
<dbReference type="EC" id="1.2.1.-" evidence="3"/>
<dbReference type="EMBL" id="MSFM01000014">
    <property type="protein sequence ID" value="PKY00569.1"/>
    <property type="molecule type" value="Genomic_DNA"/>
</dbReference>
<dbReference type="SMR" id="A0A2I1CSH4"/>
<dbReference type="VEuPathDB" id="FungiDB:P168DRAFT_275880"/>
<dbReference type="OrthoDB" id="408177at2759"/>
<dbReference type="Proteomes" id="UP000234254">
    <property type="component" value="Unassembled WGS sequence"/>
</dbReference>
<dbReference type="GO" id="GO:0016874">
    <property type="term" value="F:ligase activity"/>
    <property type="evidence" value="ECO:0007669"/>
    <property type="project" value="UniProtKB-KW"/>
</dbReference>
<dbReference type="GO" id="GO:0016491">
    <property type="term" value="F:oxidoreductase activity"/>
    <property type="evidence" value="ECO:0007669"/>
    <property type="project" value="UniProtKB-KW"/>
</dbReference>
<dbReference type="GO" id="GO:0009820">
    <property type="term" value="P:alkaloid metabolic process"/>
    <property type="evidence" value="ECO:0007669"/>
    <property type="project" value="UniProtKB-KW"/>
</dbReference>
<dbReference type="CDD" id="cd05930">
    <property type="entry name" value="A_NRPS"/>
    <property type="match status" value="1"/>
</dbReference>
<dbReference type="CDD" id="cd05235">
    <property type="entry name" value="SDR_e1"/>
    <property type="match status" value="1"/>
</dbReference>
<dbReference type="Gene3D" id="3.30.300.30">
    <property type="match status" value="1"/>
</dbReference>
<dbReference type="Gene3D" id="3.40.50.980">
    <property type="match status" value="2"/>
</dbReference>
<dbReference type="Gene3D" id="1.10.1200.10">
    <property type="entry name" value="ACP-like"/>
    <property type="match status" value="1"/>
</dbReference>
<dbReference type="Gene3D" id="2.30.38.10">
    <property type="entry name" value="Luciferase, Domain 3"/>
    <property type="match status" value="1"/>
</dbReference>
<dbReference type="Gene3D" id="3.40.50.720">
    <property type="entry name" value="NAD(P)-binding Rossmann-like Domain"/>
    <property type="match status" value="1"/>
</dbReference>
<dbReference type="InterPro" id="IPR036736">
    <property type="entry name" value="ACP-like_sf"/>
</dbReference>
<dbReference type="InterPro" id="IPR045851">
    <property type="entry name" value="AMP-bd_C_sf"/>
</dbReference>
<dbReference type="InterPro" id="IPR020845">
    <property type="entry name" value="AMP-binding_CS"/>
</dbReference>
<dbReference type="InterPro" id="IPR000873">
    <property type="entry name" value="AMP-dep_synth/lig_dom"/>
</dbReference>
<dbReference type="InterPro" id="IPR013120">
    <property type="entry name" value="Far_NAD-bd"/>
</dbReference>
<dbReference type="InterPro" id="IPR036291">
    <property type="entry name" value="NAD(P)-bd_dom_sf"/>
</dbReference>
<dbReference type="InterPro" id="IPR009081">
    <property type="entry name" value="PP-bd_ACP"/>
</dbReference>
<dbReference type="InterPro" id="IPR010080">
    <property type="entry name" value="Thioester_reductase-like_dom"/>
</dbReference>
<dbReference type="NCBIfam" id="TIGR01746">
    <property type="entry name" value="Thioester-redct"/>
    <property type="match status" value="1"/>
</dbReference>
<dbReference type="PANTHER" id="PTHR44845:SF6">
    <property type="entry name" value="BETA-ALANINE-ACTIVATING ENZYME"/>
    <property type="match status" value="1"/>
</dbReference>
<dbReference type="PANTHER" id="PTHR44845">
    <property type="entry name" value="CARRIER DOMAIN-CONTAINING PROTEIN"/>
    <property type="match status" value="1"/>
</dbReference>
<dbReference type="Pfam" id="PF00501">
    <property type="entry name" value="AMP-binding"/>
    <property type="match status" value="1"/>
</dbReference>
<dbReference type="Pfam" id="PF07993">
    <property type="entry name" value="NAD_binding_4"/>
    <property type="match status" value="1"/>
</dbReference>
<dbReference type="Pfam" id="PF00550">
    <property type="entry name" value="PP-binding"/>
    <property type="match status" value="1"/>
</dbReference>
<dbReference type="SUPFAM" id="SSF56801">
    <property type="entry name" value="Acetyl-CoA synthetase-like"/>
    <property type="match status" value="1"/>
</dbReference>
<dbReference type="SUPFAM" id="SSF47336">
    <property type="entry name" value="ACP-like"/>
    <property type="match status" value="1"/>
</dbReference>
<dbReference type="SUPFAM" id="SSF51735">
    <property type="entry name" value="NAD(P)-binding Rossmann-fold domains"/>
    <property type="match status" value="1"/>
</dbReference>
<dbReference type="PROSITE" id="PS00455">
    <property type="entry name" value="AMP_BINDING"/>
    <property type="match status" value="1"/>
</dbReference>
<dbReference type="PROSITE" id="PS50075">
    <property type="entry name" value="CARRIER"/>
    <property type="match status" value="1"/>
</dbReference>
<organism>
    <name type="scientific">Aspergillus campestris (strain IBT 28561)</name>
    <dbReference type="NCBI Taxonomy" id="1392248"/>
    <lineage>
        <taxon>Eukaryota</taxon>
        <taxon>Fungi</taxon>
        <taxon>Dikarya</taxon>
        <taxon>Ascomycota</taxon>
        <taxon>Pezizomycotina</taxon>
        <taxon>Eurotiomycetes</taxon>
        <taxon>Eurotiomycetidae</taxon>
        <taxon>Eurotiales</taxon>
        <taxon>Aspergillaceae</taxon>
        <taxon>Aspergillus</taxon>
        <taxon>Aspergillus subgen. Circumdati</taxon>
    </lineage>
</organism>
<name>CPSA_ASPC2</name>
<accession>A0A2I1CSH4</accession>
<sequence length="1043" mass="115763">MDLSNHISLFDTKATALTSCTSIPLDGERDDSLGLAGAIYRRAQENPSAPAIEFDGETISYAQLHCRAALLAKQLTRKGVSREEAIGIMTGTGFEQIVAQAAVVYAGCTCCALDPTLPFAQLQYRLTNAGARICLVDQENSNRLKEFEVIAIRLEGITPSQVTAELAVPPRAMGTEHRTHLMHTSGSTGKPKTVQIQARALLHLSRDDRNVPIGYEDRTAQMAMVSFDISLFEIWVTLLRGATIVPVSRTLLSDVARLARTWRELRVTVMLVPASLLPMVVFAMPTVFSGMQVVYSGGEMPNLPAMKMALEQGPPNHLFNCYGPTECCIFSLVHEVTLKDTKNSVCPLTRLISDTRIEILDPSGQPVPDGDSGELFIGGDGVSPGYVNLADKTAERFVTTRQYPALPSGCNFYATGDLVRRTGTGEIYVHGRIDNQVKIRGYRVELEGVEAAIMDTGLVTTTAACKVQRGDDDLGAALVAFVIPKNPNTFTPDQLTDALKVQVAEYLVPQVEVCTEMPLNGHTKIDRERLVREFLEAATKRQLEMAGTQDASTTISRLRKIWHSVLPGCSRHIEDGDTFHALGGTSLQAAMLLIRMKREFSVELTAVMVYEQFTLAQMARYVDEGGAKYTIHAAHNRAYRQDVDIYKSLALQPLSGQPPQWDGPFEGRIFMTGATGFVGAFLLQTLLTLPEVKMVVCLVRAKNDEKARNRVMGVQTQYNLCQSSVDYSKLVAVAGDLDSPTLGLGGELFHQLGYWASCIFHSGAHVNYAQPYQSHRDANVLGTANILRFQATGRPKRLFYLSTLNIYGPTGLVDGYTRVGENDPITKFMDAVQYDNGYAQSKWVAEKMVIDAIRDNFPISIFRPGAIFCHSKTGTGNGTDFVARLMASCMRLKHYPTMPQQSKNFVPVDYLVDAILHLSRQQCSLGQAYNVVPTLHEQPENEMRDMFHMLEKACQTPMKEMPYDKWLELLKTLDDNNDPLRPLLPMLEEKVFENHCRWEMYSKMPIYGTENLTRDLRDVPGLAQFPVLDQPLLNRFLSELNLI</sequence>
<gene>
    <name evidence="4" type="primary">cpsA</name>
    <name type="ORF">P168DRAFT_275880</name>
</gene>
<evidence type="ECO:0000255" key="1"/>
<evidence type="ECO:0000255" key="2">
    <source>
        <dbReference type="PROSITE-ProRule" id="PRU00258"/>
    </source>
</evidence>
<evidence type="ECO:0000269" key="3">
    <source>
    </source>
</evidence>
<evidence type="ECO:0000303" key="4">
    <source>
    </source>
</evidence>
<evidence type="ECO:0000305" key="5"/>
<evidence type="ECO:0000305" key="6">
    <source>
    </source>
</evidence>
<keyword id="KW-0017">Alkaloid metabolism</keyword>
<keyword id="KW-0560">Oxidoreductase</keyword>
<keyword id="KW-0596">Phosphopantetheine</keyword>
<keyword id="KW-0597">Phosphoprotein</keyword>